<keyword id="KW-0028">Amino-acid biosynthesis</keyword>
<keyword id="KW-0963">Cytoplasm</keyword>
<keyword id="KW-0368">Histidine biosynthesis</keyword>
<keyword id="KW-0413">Isomerase</keyword>
<keyword id="KW-1185">Reference proteome</keyword>
<gene>
    <name evidence="1" type="primary">hisA</name>
    <name type="ordered locus">Hore_02230</name>
</gene>
<evidence type="ECO:0000255" key="1">
    <source>
        <dbReference type="HAMAP-Rule" id="MF_01014"/>
    </source>
</evidence>
<dbReference type="EC" id="5.3.1.16" evidence="1"/>
<dbReference type="EMBL" id="CP001098">
    <property type="protein sequence ID" value="ACL68984.1"/>
    <property type="molecule type" value="Genomic_DNA"/>
</dbReference>
<dbReference type="RefSeq" id="WP_012635182.1">
    <property type="nucleotide sequence ID" value="NC_011899.1"/>
</dbReference>
<dbReference type="SMR" id="B8D115"/>
<dbReference type="STRING" id="373903.Hore_02230"/>
<dbReference type="KEGG" id="hor:Hore_02230"/>
<dbReference type="eggNOG" id="COG0106">
    <property type="taxonomic scope" value="Bacteria"/>
</dbReference>
<dbReference type="HOGENOM" id="CLU_048577_1_2_9"/>
<dbReference type="OrthoDB" id="9781903at2"/>
<dbReference type="UniPathway" id="UPA00031">
    <property type="reaction ID" value="UER00009"/>
</dbReference>
<dbReference type="Proteomes" id="UP000000719">
    <property type="component" value="Chromosome"/>
</dbReference>
<dbReference type="GO" id="GO:0005737">
    <property type="term" value="C:cytoplasm"/>
    <property type="evidence" value="ECO:0007669"/>
    <property type="project" value="UniProtKB-SubCell"/>
</dbReference>
<dbReference type="GO" id="GO:0003949">
    <property type="term" value="F:1-(5-phosphoribosyl)-5-[(5-phosphoribosylamino)methylideneamino]imidazole-4-carboxamide isomerase activity"/>
    <property type="evidence" value="ECO:0007669"/>
    <property type="project" value="UniProtKB-UniRule"/>
</dbReference>
<dbReference type="GO" id="GO:0000105">
    <property type="term" value="P:L-histidine biosynthetic process"/>
    <property type="evidence" value="ECO:0007669"/>
    <property type="project" value="UniProtKB-UniRule"/>
</dbReference>
<dbReference type="GO" id="GO:0000162">
    <property type="term" value="P:L-tryptophan biosynthetic process"/>
    <property type="evidence" value="ECO:0007669"/>
    <property type="project" value="TreeGrafter"/>
</dbReference>
<dbReference type="CDD" id="cd04732">
    <property type="entry name" value="HisA"/>
    <property type="match status" value="1"/>
</dbReference>
<dbReference type="FunFam" id="3.20.20.70:FF:000009">
    <property type="entry name" value="1-(5-phosphoribosyl)-5-[(5-phosphoribosylamino)methylideneamino] imidazole-4-carboxamide isomerase"/>
    <property type="match status" value="1"/>
</dbReference>
<dbReference type="Gene3D" id="3.20.20.70">
    <property type="entry name" value="Aldolase class I"/>
    <property type="match status" value="1"/>
</dbReference>
<dbReference type="HAMAP" id="MF_01014">
    <property type="entry name" value="HisA"/>
    <property type="match status" value="1"/>
</dbReference>
<dbReference type="InterPro" id="IPR013785">
    <property type="entry name" value="Aldolase_TIM"/>
</dbReference>
<dbReference type="InterPro" id="IPR006062">
    <property type="entry name" value="His_biosynth"/>
</dbReference>
<dbReference type="InterPro" id="IPR006063">
    <property type="entry name" value="HisA_bact_arch"/>
</dbReference>
<dbReference type="InterPro" id="IPR044524">
    <property type="entry name" value="Isoase_HisA-like"/>
</dbReference>
<dbReference type="InterPro" id="IPR023016">
    <property type="entry name" value="Isoase_HisA-like_bact"/>
</dbReference>
<dbReference type="InterPro" id="IPR011060">
    <property type="entry name" value="RibuloseP-bd_barrel"/>
</dbReference>
<dbReference type="NCBIfam" id="TIGR00007">
    <property type="entry name" value="1-(5-phosphoribosyl)-5-[(5-phosphoribosylamino)methylideneamino]imidazole-4-carboxamide isomerase"/>
    <property type="match status" value="1"/>
</dbReference>
<dbReference type="PANTHER" id="PTHR43090">
    <property type="entry name" value="1-(5-PHOSPHORIBOSYL)-5-[(5-PHOSPHORIBOSYLAMINO)METHYLIDENEAMINO] IMIDAZOLE-4-CARBOXAMIDE ISOMERASE"/>
    <property type="match status" value="1"/>
</dbReference>
<dbReference type="PANTHER" id="PTHR43090:SF2">
    <property type="entry name" value="1-(5-PHOSPHORIBOSYL)-5-[(5-PHOSPHORIBOSYLAMINO)METHYLIDENEAMINO] IMIDAZOLE-4-CARBOXAMIDE ISOMERASE"/>
    <property type="match status" value="1"/>
</dbReference>
<dbReference type="Pfam" id="PF00977">
    <property type="entry name" value="His_biosynth"/>
    <property type="match status" value="1"/>
</dbReference>
<dbReference type="SUPFAM" id="SSF51366">
    <property type="entry name" value="Ribulose-phoshate binding barrel"/>
    <property type="match status" value="1"/>
</dbReference>
<reference key="1">
    <citation type="journal article" date="2009" name="PLoS ONE">
        <title>Genome analysis of the anaerobic thermohalophilic bacterium Halothermothrix orenii.</title>
        <authorList>
            <person name="Mavromatis K."/>
            <person name="Ivanova N."/>
            <person name="Anderson I."/>
            <person name="Lykidis A."/>
            <person name="Hooper S.D."/>
            <person name="Sun H."/>
            <person name="Kunin V."/>
            <person name="Lapidus A."/>
            <person name="Hugenholtz P."/>
            <person name="Patel B."/>
            <person name="Kyrpides N.C."/>
        </authorList>
    </citation>
    <scope>NUCLEOTIDE SEQUENCE [LARGE SCALE GENOMIC DNA]</scope>
    <source>
        <strain>H 168 / OCM 544 / DSM 9562</strain>
    </source>
</reference>
<feature type="chain" id="PRO_1000148974" description="1-(5-phosphoribosyl)-5-[(5-phosphoribosylamino)methylideneamino] imidazole-4-carboxamide isomerase">
    <location>
        <begin position="1"/>
        <end position="237"/>
    </location>
</feature>
<feature type="active site" description="Proton acceptor" evidence="1">
    <location>
        <position position="8"/>
    </location>
</feature>
<feature type="active site" description="Proton donor" evidence="1">
    <location>
        <position position="130"/>
    </location>
</feature>
<protein>
    <recommendedName>
        <fullName evidence="1">1-(5-phosphoribosyl)-5-[(5-phosphoribosylamino)methylideneamino] imidazole-4-carboxamide isomerase</fullName>
        <ecNumber evidence="1">5.3.1.16</ecNumber>
    </recommendedName>
    <alternativeName>
        <fullName evidence="1">Phosphoribosylformimino-5-aminoimidazole carboxamide ribotide isomerase</fullName>
    </alternativeName>
</protein>
<accession>B8D115</accession>
<comment type="catalytic activity">
    <reaction evidence="1">
        <text>1-(5-phospho-beta-D-ribosyl)-5-[(5-phospho-beta-D-ribosylamino)methylideneamino]imidazole-4-carboxamide = 5-[(5-phospho-1-deoxy-D-ribulos-1-ylimino)methylamino]-1-(5-phospho-beta-D-ribosyl)imidazole-4-carboxamide</text>
        <dbReference type="Rhea" id="RHEA:15469"/>
        <dbReference type="ChEBI" id="CHEBI:58435"/>
        <dbReference type="ChEBI" id="CHEBI:58525"/>
        <dbReference type="EC" id="5.3.1.16"/>
    </reaction>
</comment>
<comment type="pathway">
    <text evidence="1">Amino-acid biosynthesis; L-histidine biosynthesis; L-histidine from 5-phospho-alpha-D-ribose 1-diphosphate: step 4/9.</text>
</comment>
<comment type="subcellular location">
    <subcellularLocation>
        <location evidence="1">Cytoplasm</location>
    </subcellularLocation>
</comment>
<comment type="similarity">
    <text evidence="1">Belongs to the HisA/HisF family.</text>
</comment>
<proteinExistence type="inferred from homology"/>
<name>HIS4_HALOH</name>
<sequence length="237" mass="25910">MEVIPAVDIKDGSCVRLKKGDFNKRRVYSTSPVDVALYWEKHGASRLHIVDLDGAKSGWPTHLKTIREIALRVNIPLQVGGGIRSLKVIKKYLDSGVDRIILGTVALKNPELVKRALDNFGSNRIVVGVDARGGKVATEGWLKTSQVTVEDIISEMEEVGVKTFIYTDINRDGMLKGPDIEGIKRVLKSTKARIIASGGISSRQDLINLKAIGIKAAIVGKALYEGNLPLEVLNQYP</sequence>
<organism>
    <name type="scientific">Halothermothrix orenii (strain H 168 / OCM 544 / DSM 9562)</name>
    <dbReference type="NCBI Taxonomy" id="373903"/>
    <lineage>
        <taxon>Bacteria</taxon>
        <taxon>Bacillati</taxon>
        <taxon>Bacillota</taxon>
        <taxon>Clostridia</taxon>
        <taxon>Halanaerobiales</taxon>
        <taxon>Halothermotrichaceae</taxon>
        <taxon>Halothermothrix</taxon>
    </lineage>
</organism>